<comment type="function">
    <text evidence="1">Component of the molecular motor that translocates viral genomic DNA in empty capsid during DNA packaging. Forms a tripartite terminase complex together with TRM2 and TRM3 in the host cytoplasm. Once the complex reaches the host nucleus, it interacts with the capsid portal vertex. This portal forms a ring in which genomic DNA is translocated into the capsid. TRM1 carries an endonuclease activity that plays an important role for the cleavage of concatemeric viral DNA into unit length genomes.</text>
</comment>
<comment type="subunit">
    <text evidence="1">Associates with TRM2 and TRM3 to form the tripartite terminase complex. Interacts with portal protein.</text>
</comment>
<comment type="subcellular location">
    <subcellularLocation>
        <location evidence="1">Host nucleus</location>
    </subcellularLocation>
    <text evidence="1">Found associated with the external surface of the viral capsid during assembly and DNA packaging, but seems absent in extracellular mature virions.</text>
</comment>
<comment type="similarity">
    <text evidence="1">Belongs to the herpesviridae TRM1 protein family.</text>
</comment>
<proteinExistence type="inferred from homology"/>
<organism>
    <name type="scientific">Equine herpesvirus 2 (strain 86/87)</name>
    <name type="common">EHV-2</name>
    <dbReference type="NCBI Taxonomy" id="82831"/>
    <lineage>
        <taxon>Viruses</taxon>
        <taxon>Duplodnaviria</taxon>
        <taxon>Heunggongvirae</taxon>
        <taxon>Peploviricota</taxon>
        <taxon>Herviviricetes</taxon>
        <taxon>Herpesvirales</taxon>
        <taxon>Orthoherpesviridae</taxon>
        <taxon>Gammaherpesvirinae</taxon>
        <taxon>Percavirus</taxon>
        <taxon>Percavirus equidgamma2</taxon>
        <taxon>Equid gammaherpesvirus 2</taxon>
    </lineage>
</organism>
<reference key="1">
    <citation type="journal article" date="1995" name="J. Mol. Biol.">
        <title>The DNA sequence of equine herpesvirus 2.</title>
        <authorList>
            <person name="Telford E.A.R."/>
            <person name="Watson M.S."/>
            <person name="Aird H.C."/>
            <person name="Perry J."/>
            <person name="Davison A.J."/>
        </authorList>
    </citation>
    <scope>NUCLEOTIDE SEQUENCE [LARGE SCALE GENOMIC DNA]</scope>
</reference>
<dbReference type="EMBL" id="U20824">
    <property type="protein sequence ID" value="AAC13794.1"/>
    <property type="molecule type" value="Genomic_DNA"/>
</dbReference>
<dbReference type="PIR" id="S55601">
    <property type="entry name" value="S55601"/>
</dbReference>
<dbReference type="SMR" id="Q66612"/>
<dbReference type="KEGG" id="vg:1461062"/>
<dbReference type="Proteomes" id="UP000007083">
    <property type="component" value="Segment"/>
</dbReference>
<dbReference type="GO" id="GO:0042025">
    <property type="term" value="C:host cell nucleus"/>
    <property type="evidence" value="ECO:0007669"/>
    <property type="project" value="UniProtKB-SubCell"/>
</dbReference>
<dbReference type="GO" id="GO:0005524">
    <property type="term" value="F:ATP binding"/>
    <property type="evidence" value="ECO:0007669"/>
    <property type="project" value="UniProtKB-KW"/>
</dbReference>
<dbReference type="GO" id="GO:0008270">
    <property type="term" value="F:zinc ion binding"/>
    <property type="evidence" value="ECO:0007669"/>
    <property type="project" value="UniProtKB-KW"/>
</dbReference>
<dbReference type="GO" id="GO:0019073">
    <property type="term" value="P:viral DNA genome packaging"/>
    <property type="evidence" value="ECO:0007669"/>
    <property type="project" value="InterPro"/>
</dbReference>
<dbReference type="HAMAP" id="MF_04014">
    <property type="entry name" value="HSV_TRM1"/>
    <property type="match status" value="1"/>
</dbReference>
<dbReference type="InterPro" id="IPR000501">
    <property type="entry name" value="UL28/UL56"/>
</dbReference>
<dbReference type="Pfam" id="PF01366">
    <property type="entry name" value="PRTP"/>
    <property type="match status" value="1"/>
</dbReference>
<sequence>MARELAAVYAQVFDLAAEVSLLGYCDPSSIDKRCVMANSNKVFKLCESLLPCLRLQNDTECSPLSLELQHLLQNTREALGVLTDLLSGDPSRSEYFEALHPSRPLEGPCKRHARVRVPFYGGAEKTVSLSLLNDVEVFFKRLNSVFYCLPAEGALEALGETVAFLGRLRGVSPIPPADAYVSSVPCASCFAEAAMLPNQGESVLSMLAAVNCNHVCRQVPSDPVIGVFENELRHLGADARAAGRAGGGRESERRGREDADDEEDDEEEPRDGQGDAGDGAALRVLTESSLSVLAGHTIFEEEDGRLAEISNLVYWSSAADRGGVGGTARATSSSHMAKLFAHEARMHRSRAWLGRGAPSHFFDAHRPSPLESLFCGGVFNSIDDTIAALQKDCSATFLKKSNYQTLIQQQNELYVRLNEVLNGAGRDEGGAKGAEAIADAEPLKPDGGASCDPRDVLSDARVRRDLYLKKLTRDGLRRLTDCIETHGRVLSDTLSLRVWGSALYASAARLVNHFLFRRQFVGLGWADLTAGGEAAFENSKYIKNALHGQRLNREHLDSIVVHFYRLITGPLSLQNSHFPVPDNVALAYCLDAAGAMPHQKLVITEMIWPGIESKDWIDCNFNSFYSIETGDLNLTQKKTLNYIREAVLSISLYNRVWEKSLSLLSATELRGSCLAESASGELGEGVYLTYEGTAPLVLVFDSKGYVFKDLYTLLYTHLQLSGRRQASV</sequence>
<name>TRM1_EHV2</name>
<protein>
    <recommendedName>
        <fullName evidence="1">Tripartite terminase subunit 1</fullName>
    </recommendedName>
</protein>
<feature type="chain" id="PRO_0000406035" description="Tripartite terminase subunit 1">
    <location>
        <begin position="1"/>
        <end position="728"/>
    </location>
</feature>
<feature type="zinc finger region" description="C3H1-type" evidence="1">
    <location>
        <begin position="186"/>
        <end position="214"/>
    </location>
</feature>
<feature type="region of interest" description="Disordered" evidence="2">
    <location>
        <begin position="239"/>
        <end position="278"/>
    </location>
</feature>
<feature type="compositionally biased region" description="Basic and acidic residues" evidence="2">
    <location>
        <begin position="247"/>
        <end position="257"/>
    </location>
</feature>
<feature type="compositionally biased region" description="Acidic residues" evidence="2">
    <location>
        <begin position="258"/>
        <end position="269"/>
    </location>
</feature>
<feature type="binding site" evidence="1">
    <location>
        <begin position="653"/>
        <end position="660"/>
    </location>
    <ligand>
        <name>ATP</name>
        <dbReference type="ChEBI" id="CHEBI:30616"/>
    </ligand>
</feature>
<accession>Q66612</accession>
<keyword id="KW-0067">ATP-binding</keyword>
<keyword id="KW-1048">Host nucleus</keyword>
<keyword id="KW-0426">Late protein</keyword>
<keyword id="KW-0479">Metal-binding</keyword>
<keyword id="KW-0547">Nucleotide-binding</keyword>
<keyword id="KW-1185">Reference proteome</keyword>
<keyword id="KW-0231">Viral genome packaging</keyword>
<keyword id="KW-1188">Viral release from host cell</keyword>
<keyword id="KW-0862">Zinc</keyword>
<keyword id="KW-0863">Zinc-finger</keyword>
<evidence type="ECO:0000255" key="1">
    <source>
        <dbReference type="HAMAP-Rule" id="MF_04014"/>
    </source>
</evidence>
<evidence type="ECO:0000256" key="2">
    <source>
        <dbReference type="SAM" id="MobiDB-lite"/>
    </source>
</evidence>
<gene>
    <name evidence="1" type="primary">TRM1</name>
    <name type="ordered locus">7</name>
</gene>
<organismHost>
    <name type="scientific">Equus caballus</name>
    <name type="common">Horse</name>
    <dbReference type="NCBI Taxonomy" id="9796"/>
</organismHost>